<comment type="function">
    <text evidence="1">One of the primary rRNA binding proteins, it binds directly to 16S rRNA where it nucleates assembly of the head domain of the 30S subunit. Is located at the subunit interface close to the decoding center, probably blocks exit of the E-site tRNA.</text>
</comment>
<comment type="subunit">
    <text evidence="1">Part of the 30S ribosomal subunit. Contacts proteins S9 and S11.</text>
</comment>
<comment type="similarity">
    <text evidence="1">Belongs to the universal ribosomal protein uS7 family.</text>
</comment>
<gene>
    <name evidence="1" type="primary">rpsG</name>
    <name type="ordered locus">PSHAa0225</name>
</gene>
<sequence length="156" mass="17592">MPRRRVIGQRKILPDPKFGSELLAKFVNIVMLDGKKSTAEKIVYGALNVAAEKSGKSHLEIFETALDNIRPQVEVKSRRVGGSTYQVPVEVRPVRRNALGMRWLVDAARKRGEKSMGLRLAQEIVDAADNKGTAVKKREDVHRMAEANKAFAHYRW</sequence>
<feature type="chain" id="PRO_0000226516" description="Small ribosomal subunit protein uS7">
    <location>
        <begin position="1"/>
        <end position="156"/>
    </location>
</feature>
<keyword id="KW-1185">Reference proteome</keyword>
<keyword id="KW-0687">Ribonucleoprotein</keyword>
<keyword id="KW-0689">Ribosomal protein</keyword>
<keyword id="KW-0694">RNA-binding</keyword>
<keyword id="KW-0699">rRNA-binding</keyword>
<keyword id="KW-0820">tRNA-binding</keyword>
<dbReference type="EMBL" id="CR954246">
    <property type="protein sequence ID" value="CAI85328.1"/>
    <property type="molecule type" value="Genomic_DNA"/>
</dbReference>
<dbReference type="SMR" id="Q3ILP6"/>
<dbReference type="STRING" id="326442.PSHAa0225"/>
<dbReference type="KEGG" id="pha:PSHAa0225"/>
<dbReference type="PATRIC" id="fig|326442.8.peg.216"/>
<dbReference type="eggNOG" id="COG0049">
    <property type="taxonomic scope" value="Bacteria"/>
</dbReference>
<dbReference type="HOGENOM" id="CLU_072226_1_1_6"/>
<dbReference type="BioCyc" id="PHAL326442:PSHA_RS01110-MONOMER"/>
<dbReference type="Proteomes" id="UP000006843">
    <property type="component" value="Chromosome I"/>
</dbReference>
<dbReference type="GO" id="GO:0015935">
    <property type="term" value="C:small ribosomal subunit"/>
    <property type="evidence" value="ECO:0007669"/>
    <property type="project" value="InterPro"/>
</dbReference>
<dbReference type="GO" id="GO:0019843">
    <property type="term" value="F:rRNA binding"/>
    <property type="evidence" value="ECO:0007669"/>
    <property type="project" value="UniProtKB-UniRule"/>
</dbReference>
<dbReference type="GO" id="GO:0003735">
    <property type="term" value="F:structural constituent of ribosome"/>
    <property type="evidence" value="ECO:0007669"/>
    <property type="project" value="InterPro"/>
</dbReference>
<dbReference type="GO" id="GO:0000049">
    <property type="term" value="F:tRNA binding"/>
    <property type="evidence" value="ECO:0007669"/>
    <property type="project" value="UniProtKB-UniRule"/>
</dbReference>
<dbReference type="GO" id="GO:0006412">
    <property type="term" value="P:translation"/>
    <property type="evidence" value="ECO:0007669"/>
    <property type="project" value="UniProtKB-UniRule"/>
</dbReference>
<dbReference type="CDD" id="cd14869">
    <property type="entry name" value="uS7_Bacteria"/>
    <property type="match status" value="1"/>
</dbReference>
<dbReference type="FunFam" id="1.10.455.10:FF:000001">
    <property type="entry name" value="30S ribosomal protein S7"/>
    <property type="match status" value="1"/>
</dbReference>
<dbReference type="Gene3D" id="1.10.455.10">
    <property type="entry name" value="Ribosomal protein S7 domain"/>
    <property type="match status" value="1"/>
</dbReference>
<dbReference type="HAMAP" id="MF_00480_B">
    <property type="entry name" value="Ribosomal_uS7_B"/>
    <property type="match status" value="1"/>
</dbReference>
<dbReference type="InterPro" id="IPR000235">
    <property type="entry name" value="Ribosomal_uS7"/>
</dbReference>
<dbReference type="InterPro" id="IPR005717">
    <property type="entry name" value="Ribosomal_uS7_bac/org-type"/>
</dbReference>
<dbReference type="InterPro" id="IPR020606">
    <property type="entry name" value="Ribosomal_uS7_CS"/>
</dbReference>
<dbReference type="InterPro" id="IPR023798">
    <property type="entry name" value="Ribosomal_uS7_dom"/>
</dbReference>
<dbReference type="InterPro" id="IPR036823">
    <property type="entry name" value="Ribosomal_uS7_dom_sf"/>
</dbReference>
<dbReference type="NCBIfam" id="TIGR01029">
    <property type="entry name" value="rpsG_bact"/>
    <property type="match status" value="1"/>
</dbReference>
<dbReference type="PANTHER" id="PTHR11205">
    <property type="entry name" value="RIBOSOMAL PROTEIN S7"/>
    <property type="match status" value="1"/>
</dbReference>
<dbReference type="Pfam" id="PF00177">
    <property type="entry name" value="Ribosomal_S7"/>
    <property type="match status" value="1"/>
</dbReference>
<dbReference type="PIRSF" id="PIRSF002122">
    <property type="entry name" value="RPS7p_RPS7a_RPS5e_RPS7o"/>
    <property type="match status" value="1"/>
</dbReference>
<dbReference type="SUPFAM" id="SSF47973">
    <property type="entry name" value="Ribosomal protein S7"/>
    <property type="match status" value="1"/>
</dbReference>
<dbReference type="PROSITE" id="PS00052">
    <property type="entry name" value="RIBOSOMAL_S7"/>
    <property type="match status" value="1"/>
</dbReference>
<protein>
    <recommendedName>
        <fullName evidence="1">Small ribosomal subunit protein uS7</fullName>
    </recommendedName>
    <alternativeName>
        <fullName evidence="2">30S ribosomal protein S7</fullName>
    </alternativeName>
</protein>
<organism>
    <name type="scientific">Pseudoalteromonas translucida (strain TAC 125)</name>
    <dbReference type="NCBI Taxonomy" id="326442"/>
    <lineage>
        <taxon>Bacteria</taxon>
        <taxon>Pseudomonadati</taxon>
        <taxon>Pseudomonadota</taxon>
        <taxon>Gammaproteobacteria</taxon>
        <taxon>Alteromonadales</taxon>
        <taxon>Pseudoalteromonadaceae</taxon>
        <taxon>Pseudoalteromonas</taxon>
    </lineage>
</organism>
<evidence type="ECO:0000255" key="1">
    <source>
        <dbReference type="HAMAP-Rule" id="MF_00480"/>
    </source>
</evidence>
<evidence type="ECO:0000305" key="2"/>
<proteinExistence type="inferred from homology"/>
<reference key="1">
    <citation type="journal article" date="2005" name="Genome Res.">
        <title>Coping with cold: the genome of the versatile marine Antarctica bacterium Pseudoalteromonas haloplanktis TAC125.</title>
        <authorList>
            <person name="Medigue C."/>
            <person name="Krin E."/>
            <person name="Pascal G."/>
            <person name="Barbe V."/>
            <person name="Bernsel A."/>
            <person name="Bertin P.N."/>
            <person name="Cheung F."/>
            <person name="Cruveiller S."/>
            <person name="D'Amico S."/>
            <person name="Duilio A."/>
            <person name="Fang G."/>
            <person name="Feller G."/>
            <person name="Ho C."/>
            <person name="Mangenot S."/>
            <person name="Marino G."/>
            <person name="Nilsson J."/>
            <person name="Parrilli E."/>
            <person name="Rocha E.P.C."/>
            <person name="Rouy Z."/>
            <person name="Sekowska A."/>
            <person name="Tutino M.L."/>
            <person name="Vallenet D."/>
            <person name="von Heijne G."/>
            <person name="Danchin A."/>
        </authorList>
    </citation>
    <scope>NUCLEOTIDE SEQUENCE [LARGE SCALE GENOMIC DNA]</scope>
    <source>
        <strain>TAC 125</strain>
    </source>
</reference>
<accession>Q3ILP6</accession>
<name>RS7_PSET1</name>